<comment type="function">
    <text evidence="4 8">Converts trimethyllysine (TML) into hydroxytrimethyllysine (HTML) (PubMed:11431483, PubMed:23092983).</text>
</comment>
<comment type="catalytic activity">
    <reaction evidence="9 10">
        <text>N(6),N(6),N(6)-trimethyl-L-lysine + 2-oxoglutarate + O2 = (3S)-3-hydroxy-N(6),N(6),N(6)-trimethyl-L-lysine + succinate + CO2</text>
        <dbReference type="Rhea" id="RHEA:14181"/>
        <dbReference type="ChEBI" id="CHEBI:15379"/>
        <dbReference type="ChEBI" id="CHEBI:16526"/>
        <dbReference type="ChEBI" id="CHEBI:16810"/>
        <dbReference type="ChEBI" id="CHEBI:30031"/>
        <dbReference type="ChEBI" id="CHEBI:58100"/>
        <dbReference type="ChEBI" id="CHEBI:141499"/>
        <dbReference type="EC" id="1.14.11.8"/>
    </reaction>
</comment>
<comment type="cofactor">
    <cofactor evidence="1">
        <name>Fe(2+)</name>
        <dbReference type="ChEBI" id="CHEBI:29033"/>
    </cofactor>
    <text evidence="1">Binds 1 Fe(2+) ion per subunit.</text>
</comment>
<comment type="cofactor">
    <cofactor>
        <name>L-ascorbate</name>
        <dbReference type="ChEBI" id="CHEBI:38290"/>
    </cofactor>
</comment>
<comment type="pathway">
    <text>Amine and polyamine biosynthesis; carnitine biosynthesis.</text>
</comment>
<comment type="subunit">
    <text evidence="3">Homodimer.</text>
</comment>
<comment type="subcellular location">
    <subcellularLocation>
        <location evidence="5">Mitochondrion matrix</location>
    </subcellularLocation>
</comment>
<comment type="alternative products">
    <event type="alternative promoter"/>
    <event type="alternative splicing"/>
    <isoform>
        <id>Q9NVH6-1</id>
        <name>1</name>
        <name>TMLHa</name>
        <name>TMLH1a</name>
        <sequence type="displayed"/>
    </isoform>
    <isoform>
        <id>Q9NVH6-3</id>
        <name>2</name>
        <name>TMLHb</name>
        <sequence type="described" ref="VSP_042278"/>
    </isoform>
    <isoform>
        <id>Q9NVH6-4</id>
        <name>3</name>
        <name>TMLHc</name>
        <sequence type="described" ref="VSP_042279"/>
    </isoform>
    <isoform>
        <id>Q9NVH6-2</id>
        <name>4</name>
        <name>TMLHd</name>
        <sequence type="described" ref="VSP_021579"/>
    </isoform>
    <isoform>
        <id>Q9NVH6-5</id>
        <name>5</name>
        <name>TMLHe</name>
        <sequence type="described" ref="VSP_042280 VSP_042281"/>
    </isoform>
    <isoform>
        <id>Q9NVH6-6</id>
        <name>6</name>
        <name>TMLHf</name>
        <sequence type="described" ref="VSP_042277"/>
    </isoform>
    <isoform>
        <id>Q9NVH6-7</id>
        <name>7</name>
        <name>TMLHg</name>
        <sequence type="described" ref="VSP_042275"/>
    </isoform>
    <isoform>
        <id>Q9NVH6-8</id>
        <name>8</name>
        <name>TMLH1b</name>
        <sequence type="described" ref="VSP_042276"/>
    </isoform>
</comment>
<comment type="tissue specificity">
    <text evidence="5 6">All isoforms, but isoform 8, are widely expressed in adult and fetal tissues. Isoform 8 is restricted to heart and skeletal muscle.</text>
</comment>
<comment type="disease" evidence="7 8">
    <disease id="DI-03482">
        <name>Autism, X-linked 6</name>
        <acronym>AUTSX6</acronym>
        <description>A form of autism, a complex multifactorial, pervasive developmental disorder characterized by impairments in reciprocal social interaction and communication, restricted and stereotyped patterns of interests and activities, and the presence of developmental abnormalities by 3 years of age. Most individuals with autism also manifest moderate intellectual disability. AUTSX6 patients may respond favorably to carnitine supplementation.</description>
        <dbReference type="MIM" id="300872"/>
    </disease>
    <text>The disease is caused by variants affecting the gene represented in this entry.</text>
</comment>
<comment type="miscellaneous">
    <molecule>Isoform 2</molecule>
    <text evidence="14">Produced by alternative splicing. Lacks enzymatic activity.</text>
</comment>
<comment type="miscellaneous">
    <molecule>Isoform 3</molecule>
    <text evidence="14">Produced by alternative splicing. Lacks enzymatic activity.</text>
</comment>
<comment type="miscellaneous">
    <molecule>Isoform 4</molecule>
    <text evidence="14">Produced by alternative splicing. Lacks enzymatic activity.</text>
</comment>
<comment type="miscellaneous">
    <molecule>Isoform 5</molecule>
    <text evidence="14">Produced by alternative splicing. Lacks enzymatic activity.</text>
</comment>
<comment type="miscellaneous">
    <molecule>Isoform 6</molecule>
    <text evidence="14">Produced by alternative splicing. Lacks the mitochondrial transit signal.</text>
</comment>
<comment type="miscellaneous">
    <molecule>Isoform 7</molecule>
    <text evidence="14">Produced by alternative splicing.</text>
</comment>
<comment type="miscellaneous">
    <molecule>Isoform 8</molecule>
    <text evidence="15">Produced by alternative promoter usage. Although the expression of the alternative 5' exon has been detected by PCR in heart and skeletal muscle, the identification of the alternative promoter leading to this form remains elusive (PubMed:17408883).</text>
</comment>
<comment type="similarity">
    <text evidence="14">Belongs to the gamma-BBH/TMLD family.</text>
</comment>
<proteinExistence type="evidence at protein level"/>
<accession>Q9NVH6</accession>
<accession>A8K6M9</accession>
<accession>B4E3R3</accession>
<accession>Q5TZB5</accession>
<accession>Q6IA90</accession>
<accession>Q8TBT0</accession>
<feature type="transit peptide" description="Mitochondrion" evidence="5">
    <location>
        <begin position="1"/>
        <end position="15"/>
    </location>
</feature>
<feature type="chain" id="PRO_0000002795" description="Trimethyllysine dioxygenase, mitochondrial">
    <location>
        <begin position="16"/>
        <end position="421"/>
    </location>
</feature>
<feature type="binding site" evidence="1">
    <location>
        <position position="242"/>
    </location>
    <ligand>
        <name>Fe cation</name>
        <dbReference type="ChEBI" id="CHEBI:24875"/>
        <note>catalytic</note>
    </ligand>
</feature>
<feature type="binding site" evidence="1">
    <location>
        <position position="244"/>
    </location>
    <ligand>
        <name>Fe cation</name>
        <dbReference type="ChEBI" id="CHEBI:24875"/>
        <note>catalytic</note>
    </ligand>
</feature>
<feature type="binding site" evidence="1">
    <location>
        <position position="389"/>
    </location>
    <ligand>
        <name>Fe cation</name>
        <dbReference type="ChEBI" id="CHEBI:24875"/>
        <note>catalytic</note>
    </ligand>
</feature>
<feature type="modified residue" description="N6-acetyllysine" evidence="2">
    <location>
        <position position="179"/>
    </location>
</feature>
<feature type="modified residue" description="N6-acetyllysine" evidence="16">
    <location>
        <position position="236"/>
    </location>
</feature>
<feature type="splice variant" id="VSP_042275" description="In isoform 7." evidence="11">
    <location>
        <begin position="1"/>
        <end position="68"/>
    </location>
</feature>
<feature type="splice variant" id="VSP_042276" description="In isoform 8." evidence="14">
    <original>M</original>
    <variation>MKIDSFLPILRM</variation>
    <location>
        <position position="1"/>
    </location>
</feature>
<feature type="splice variant" id="VSP_042277" description="In isoform 6." evidence="14">
    <original>ELKYANTVMRFDYVWLRDHCRSASCYNSKTHQRSLDTASVDLCIKPKTIRLDETTLFFTW</original>
    <variation>G</variation>
    <location>
        <begin position="61"/>
        <end position="120"/>
    </location>
</feature>
<feature type="splice variant" id="VSP_042278" description="In isoform 2." evidence="14">
    <original>YNNYDRAVINTVPYDVVHRWYTAHRTLTIELRRPENEFWVKLKPGRVLFIDNWRVLHGRECFTGYRQLCGCYLTRDDVLNTARLLGLQA</original>
    <variation>VLRSWCSTRTIEATSKEIKLYIVCRYSYFGETLFPRSKETVTSLPHMCAYKAAATNRPWLSGVFYTI</variation>
    <location>
        <begin position="333"/>
        <end position="421"/>
    </location>
</feature>
<feature type="splice variant" id="VSP_042279" description="In isoform 3." evidence="11">
    <location>
        <begin position="333"/>
        <end position="421"/>
    </location>
</feature>
<feature type="splice variant" id="VSP_021579" description="In isoform 4." evidence="12 13">
    <original>YNNYDRAVINTVPYDVVHRWYTAHRTLTIELRRPENEFWVKLKPGRVLFIDNWRVLHGRECFTGYRQLCGCYLTRDDVLNTARLLGLQA</original>
    <variation>LFKEKQNTVNRQWNSSLQCDIPERILTYRHFVSGTSIEHRGSLI</variation>
    <location>
        <begin position="333"/>
        <end position="421"/>
    </location>
</feature>
<feature type="splice variant" id="VSP_042280" description="In isoform 5." evidence="14">
    <original>LFID</original>
    <variation>GPN</variation>
    <location>
        <begin position="380"/>
        <end position="383"/>
    </location>
</feature>
<feature type="splice variant" id="VSP_042281" description="In isoform 5." evidence="14">
    <location>
        <begin position="384"/>
        <end position="421"/>
    </location>
</feature>
<feature type="sequence variant" id="VAR_076251" description="In AUTSX6; loss of function; dbSNP:rs869320708." evidence="8">
    <original>D</original>
    <variation>H</variation>
    <location>
        <position position="244"/>
    </location>
</feature>
<feature type="sequence variant" id="VAR_076252" description="In AUTSX6; uncertain significance; dbSNP:rs782001959." evidence="8">
    <original>E</original>
    <variation>D</variation>
    <location>
        <position position="369"/>
    </location>
</feature>
<feature type="mutagenesis site" description="No catalytic activity." evidence="5">
    <original>H</original>
    <variation>L</variation>
    <location>
        <position position="389"/>
    </location>
</feature>
<feature type="sequence conflict" description="In Ref. 3; CAG33546." evidence="14" ref="3">
    <original>N</original>
    <variation>D</variation>
    <location>
        <position position="66"/>
    </location>
</feature>
<feature type="sequence conflict" description="In Ref. 2; BAF84383." evidence="14" ref="2">
    <original>F</original>
    <variation>S</variation>
    <location>
        <position position="170"/>
    </location>
</feature>
<keyword id="KW-0007">Acetylation</keyword>
<keyword id="KW-0877">Alternative promoter usage</keyword>
<keyword id="KW-0025">Alternative splicing</keyword>
<keyword id="KW-1269">Autism</keyword>
<keyword id="KW-1268">Autism spectrum disorder</keyword>
<keyword id="KW-0124">Carnitine biosynthesis</keyword>
<keyword id="KW-0223">Dioxygenase</keyword>
<keyword id="KW-0225">Disease variant</keyword>
<keyword id="KW-0408">Iron</keyword>
<keyword id="KW-0479">Metal-binding</keyword>
<keyword id="KW-0496">Mitochondrion</keyword>
<keyword id="KW-0560">Oxidoreductase</keyword>
<keyword id="KW-1267">Proteomics identification</keyword>
<keyword id="KW-1185">Reference proteome</keyword>
<keyword id="KW-0809">Transit peptide</keyword>
<evidence type="ECO:0000250" key="1"/>
<evidence type="ECO:0000250" key="2">
    <source>
        <dbReference type="UniProtKB" id="Q91ZE0"/>
    </source>
</evidence>
<evidence type="ECO:0000250" key="3">
    <source>
        <dbReference type="UniProtKB" id="Q91ZW6"/>
    </source>
</evidence>
<evidence type="ECO:0000269" key="4">
    <source>
    </source>
</evidence>
<evidence type="ECO:0000269" key="5">
    <source>
    </source>
</evidence>
<evidence type="ECO:0000269" key="6">
    <source>
    </source>
</evidence>
<evidence type="ECO:0000269" key="7">
    <source>
    </source>
</evidence>
<evidence type="ECO:0000269" key="8">
    <source>
    </source>
</evidence>
<evidence type="ECO:0000269" key="9">
    <source>
    </source>
</evidence>
<evidence type="ECO:0000269" key="10">
    <source>
    </source>
</evidence>
<evidence type="ECO:0000303" key="11">
    <source>
    </source>
</evidence>
<evidence type="ECO:0000303" key="12">
    <source>
    </source>
</evidence>
<evidence type="ECO:0000303" key="13">
    <source ref="4"/>
</evidence>
<evidence type="ECO:0000305" key="14"/>
<evidence type="ECO:0000305" key="15">
    <source>
    </source>
</evidence>
<evidence type="ECO:0007744" key="16">
    <source>
    </source>
</evidence>
<dbReference type="EC" id="1.14.11.8" evidence="9 10"/>
<dbReference type="EMBL" id="AF373407">
    <property type="protein sequence ID" value="AAL01871.1"/>
    <property type="molecule type" value="mRNA"/>
</dbReference>
<dbReference type="EMBL" id="AK001589">
    <property type="protein sequence ID" value="BAA91775.1"/>
    <property type="molecule type" value="mRNA"/>
</dbReference>
<dbReference type="EMBL" id="AK291694">
    <property type="protein sequence ID" value="BAF84383.1"/>
    <property type="molecule type" value="mRNA"/>
</dbReference>
<dbReference type="EMBL" id="AK304830">
    <property type="protein sequence ID" value="BAG65575.1"/>
    <property type="molecule type" value="mRNA"/>
</dbReference>
<dbReference type="EMBL" id="AK310667">
    <property type="status" value="NOT_ANNOTATED_CDS"/>
    <property type="molecule type" value="mRNA"/>
</dbReference>
<dbReference type="EMBL" id="CR457265">
    <property type="protein sequence ID" value="CAG33546.1"/>
    <property type="molecule type" value="mRNA"/>
</dbReference>
<dbReference type="EMBL" id="AM393196">
    <property type="protein sequence ID" value="CAL38074.1"/>
    <property type="molecule type" value="mRNA"/>
</dbReference>
<dbReference type="EMBL" id="BX276110">
    <property type="status" value="NOT_ANNOTATED_CDS"/>
    <property type="molecule type" value="Genomic_DNA"/>
</dbReference>
<dbReference type="EMBL" id="BC025269">
    <property type="protein sequence ID" value="AAH25269.1"/>
    <property type="molecule type" value="mRNA"/>
</dbReference>
<dbReference type="CCDS" id="CCDS14768.1">
    <molecule id="Q9NVH6-1"/>
</dbReference>
<dbReference type="CCDS" id="CCDS55547.1">
    <molecule id="Q9NVH6-2"/>
</dbReference>
<dbReference type="RefSeq" id="NP_001171726.1">
    <molecule id="Q9NVH6-2"/>
    <property type="nucleotide sequence ID" value="NM_001184797.2"/>
</dbReference>
<dbReference type="RefSeq" id="NP_060666.1">
    <molecule id="Q9NVH6-1"/>
    <property type="nucleotide sequence ID" value="NM_018196.4"/>
</dbReference>
<dbReference type="RefSeq" id="XP_047298191.1">
    <molecule id="Q9NVH6-7"/>
    <property type="nucleotide sequence ID" value="XM_047442235.1"/>
</dbReference>
<dbReference type="RefSeq" id="XP_047298192.1">
    <molecule id="Q9NVH6-7"/>
    <property type="nucleotide sequence ID" value="XM_047442236.1"/>
</dbReference>
<dbReference type="RefSeq" id="XP_054183321.1">
    <molecule id="Q9NVH6-1"/>
    <property type="nucleotide sequence ID" value="XM_054327346.1"/>
</dbReference>
<dbReference type="RefSeq" id="XP_054183323.1">
    <molecule id="Q9NVH6-7"/>
    <property type="nucleotide sequence ID" value="XM_054327348.1"/>
</dbReference>
<dbReference type="RefSeq" id="XP_054183324.1">
    <molecule id="Q9NVH6-7"/>
    <property type="nucleotide sequence ID" value="XM_054327349.1"/>
</dbReference>
<dbReference type="SMR" id="Q9NVH6"/>
<dbReference type="BioGRID" id="120513">
    <property type="interactions" value="85"/>
</dbReference>
<dbReference type="FunCoup" id="Q9NVH6">
    <property type="interactions" value="816"/>
</dbReference>
<dbReference type="IntAct" id="Q9NVH6">
    <property type="interactions" value="52"/>
</dbReference>
<dbReference type="MINT" id="Q9NVH6"/>
<dbReference type="STRING" id="9606.ENSP00000335261"/>
<dbReference type="DrugBank" id="DB00126">
    <property type="generic name" value="Ascorbic acid"/>
</dbReference>
<dbReference type="iPTMnet" id="Q9NVH6"/>
<dbReference type="PhosphoSitePlus" id="Q9NVH6"/>
<dbReference type="BioMuta" id="TMLHE"/>
<dbReference type="DMDM" id="21542295"/>
<dbReference type="jPOST" id="Q9NVH6"/>
<dbReference type="MassIVE" id="Q9NVH6"/>
<dbReference type="PaxDb" id="9606-ENSP00000335261"/>
<dbReference type="PeptideAtlas" id="Q9NVH6"/>
<dbReference type="ProteomicsDB" id="82803">
    <molecule id="Q9NVH6-1"/>
</dbReference>
<dbReference type="ProteomicsDB" id="82804">
    <molecule id="Q9NVH6-2"/>
</dbReference>
<dbReference type="ProteomicsDB" id="82805">
    <molecule id="Q9NVH6-3"/>
</dbReference>
<dbReference type="ProteomicsDB" id="82806">
    <molecule id="Q9NVH6-4"/>
</dbReference>
<dbReference type="ProteomicsDB" id="82807">
    <molecule id="Q9NVH6-5"/>
</dbReference>
<dbReference type="ProteomicsDB" id="82808">
    <molecule id="Q9NVH6-6"/>
</dbReference>
<dbReference type="ProteomicsDB" id="82809">
    <molecule id="Q9NVH6-7"/>
</dbReference>
<dbReference type="ProteomicsDB" id="82810">
    <molecule id="Q9NVH6-8"/>
</dbReference>
<dbReference type="Pumba" id="Q9NVH6"/>
<dbReference type="Antibodypedia" id="45457">
    <property type="antibodies" value="194 antibodies from 24 providers"/>
</dbReference>
<dbReference type="DNASU" id="55217"/>
<dbReference type="Ensembl" id="ENST00000334398.8">
    <molecule id="Q9NVH6-1"/>
    <property type="protein sequence ID" value="ENSP00000335261.3"/>
    <property type="gene ID" value="ENSG00000185973.12"/>
</dbReference>
<dbReference type="Ensembl" id="ENST00000369439.4">
    <molecule id="Q9NVH6-2"/>
    <property type="protein sequence ID" value="ENSP00000358447.4"/>
    <property type="gene ID" value="ENSG00000185973.12"/>
</dbReference>
<dbReference type="Ensembl" id="ENST00000675642.1">
    <molecule id="Q9NVH6-8"/>
    <property type="protein sequence ID" value="ENSP00000502604.1"/>
    <property type="gene ID" value="ENSG00000185973.12"/>
</dbReference>
<dbReference type="GeneID" id="55217"/>
<dbReference type="KEGG" id="hsa:55217"/>
<dbReference type="MANE-Select" id="ENST00000334398.8">
    <property type="protein sequence ID" value="ENSP00000335261.3"/>
    <property type="RefSeq nucleotide sequence ID" value="NM_018196.4"/>
    <property type="RefSeq protein sequence ID" value="NP_060666.1"/>
</dbReference>
<dbReference type="UCSC" id="uc004fnn.5">
    <molecule id="Q9NVH6-1"/>
    <property type="organism name" value="human"/>
</dbReference>
<dbReference type="AGR" id="HGNC:18308"/>
<dbReference type="CTD" id="55217"/>
<dbReference type="DisGeNET" id="55217"/>
<dbReference type="GeneCards" id="TMLHE"/>
<dbReference type="HGNC" id="HGNC:18308">
    <property type="gene designation" value="TMLHE"/>
</dbReference>
<dbReference type="HPA" id="ENSG00000185973">
    <property type="expression patterns" value="Low tissue specificity"/>
</dbReference>
<dbReference type="MalaCards" id="TMLHE"/>
<dbReference type="MIM" id="300777">
    <property type="type" value="gene"/>
</dbReference>
<dbReference type="MIM" id="300872">
    <property type="type" value="phenotype"/>
</dbReference>
<dbReference type="neXtProt" id="NX_Q9NVH6"/>
<dbReference type="OpenTargets" id="ENSG00000185973"/>
<dbReference type="PharmGKB" id="PA38311"/>
<dbReference type="VEuPathDB" id="HostDB:ENSG00000185973"/>
<dbReference type="eggNOG" id="KOG3889">
    <property type="taxonomic scope" value="Eukaryota"/>
</dbReference>
<dbReference type="GeneTree" id="ENSGT00530000063582"/>
<dbReference type="HOGENOM" id="CLU_021859_2_0_1"/>
<dbReference type="InParanoid" id="Q9NVH6"/>
<dbReference type="OMA" id="EKVCIQP"/>
<dbReference type="OrthoDB" id="408743at2759"/>
<dbReference type="PAN-GO" id="Q9NVH6">
    <property type="GO annotations" value="2 GO annotations based on evolutionary models"/>
</dbReference>
<dbReference type="PhylomeDB" id="Q9NVH6"/>
<dbReference type="TreeFam" id="TF313805"/>
<dbReference type="BioCyc" id="MetaCyc:HS08089-MONOMER"/>
<dbReference type="BRENDA" id="1.14.11.8">
    <property type="organism ID" value="2681"/>
</dbReference>
<dbReference type="PathwayCommons" id="Q9NVH6"/>
<dbReference type="Reactome" id="R-HSA-71262">
    <property type="pathway name" value="Carnitine synthesis"/>
</dbReference>
<dbReference type="SignaLink" id="Q9NVH6"/>
<dbReference type="SIGNOR" id="Q9NVH6"/>
<dbReference type="UniPathway" id="UPA00118"/>
<dbReference type="BioGRID-ORCS" id="55217">
    <property type="hits" value="9 hits in 781 CRISPR screens"/>
</dbReference>
<dbReference type="ChiTaRS" id="TMLHE">
    <property type="organism name" value="human"/>
</dbReference>
<dbReference type="GeneWiki" id="TMLHE"/>
<dbReference type="GenomeRNAi" id="55217"/>
<dbReference type="Pharos" id="Q9NVH6">
    <property type="development level" value="Tbio"/>
</dbReference>
<dbReference type="PRO" id="PR:Q9NVH6"/>
<dbReference type="Proteomes" id="UP000005640">
    <property type="component" value="Chromosome X"/>
</dbReference>
<dbReference type="RNAct" id="Q9NVH6">
    <property type="molecule type" value="protein"/>
</dbReference>
<dbReference type="Bgee" id="ENSG00000185973">
    <property type="expression patterns" value="Expressed in skeletal muscle tissue and 112 other cell types or tissues"/>
</dbReference>
<dbReference type="GO" id="GO:0005759">
    <property type="term" value="C:mitochondrial matrix"/>
    <property type="evidence" value="ECO:0000304"/>
    <property type="project" value="Reactome"/>
</dbReference>
<dbReference type="GO" id="GO:0005739">
    <property type="term" value="C:mitochondrion"/>
    <property type="evidence" value="ECO:0000314"/>
    <property type="project" value="BHF-UCL"/>
</dbReference>
<dbReference type="GO" id="GO:0005506">
    <property type="term" value="F:iron ion binding"/>
    <property type="evidence" value="ECO:0007669"/>
    <property type="project" value="InterPro"/>
</dbReference>
<dbReference type="GO" id="GO:0050353">
    <property type="term" value="F:trimethyllysine dioxygenase activity"/>
    <property type="evidence" value="ECO:0000314"/>
    <property type="project" value="BHF-UCL"/>
</dbReference>
<dbReference type="GO" id="GO:0045329">
    <property type="term" value="P:carnitine biosynthetic process"/>
    <property type="evidence" value="ECO:0000314"/>
    <property type="project" value="BHF-UCL"/>
</dbReference>
<dbReference type="CDD" id="cd00250">
    <property type="entry name" value="CAS_like"/>
    <property type="match status" value="1"/>
</dbReference>
<dbReference type="FunFam" id="3.60.130.10:FF:000001">
    <property type="entry name" value="Trimethyllysine dioxygenase, mitochondrial"/>
    <property type="match status" value="1"/>
</dbReference>
<dbReference type="FunFam" id="3.30.2020.30:FF:000003">
    <property type="entry name" value="trimethyllysine dioxygenase, mitochondrial isoform X1"/>
    <property type="match status" value="1"/>
</dbReference>
<dbReference type="Gene3D" id="3.30.2020.30">
    <property type="match status" value="1"/>
</dbReference>
<dbReference type="Gene3D" id="3.60.130.10">
    <property type="entry name" value="Clavaminate synthase-like"/>
    <property type="match status" value="1"/>
</dbReference>
<dbReference type="InterPro" id="IPR050411">
    <property type="entry name" value="AlphaKG_dependent_hydroxylases"/>
</dbReference>
<dbReference type="InterPro" id="IPR010376">
    <property type="entry name" value="GBBH-like_N"/>
</dbReference>
<dbReference type="InterPro" id="IPR038492">
    <property type="entry name" value="GBBH-like_N_sf"/>
</dbReference>
<dbReference type="InterPro" id="IPR042098">
    <property type="entry name" value="TauD-like_sf"/>
</dbReference>
<dbReference type="InterPro" id="IPR003819">
    <property type="entry name" value="TauD/TfdA-like"/>
</dbReference>
<dbReference type="InterPro" id="IPR012776">
    <property type="entry name" value="Trimethyllysine_dOase"/>
</dbReference>
<dbReference type="NCBIfam" id="TIGR02410">
    <property type="entry name" value="carnitine_TMLD"/>
    <property type="match status" value="1"/>
</dbReference>
<dbReference type="PANTHER" id="PTHR10696">
    <property type="entry name" value="GAMMA-BUTYROBETAINE HYDROXYLASE-RELATED"/>
    <property type="match status" value="1"/>
</dbReference>
<dbReference type="PANTHER" id="PTHR10696:SF51">
    <property type="entry name" value="TRIMETHYLLYSINE DIOXYGENASE, MITOCHONDRIAL"/>
    <property type="match status" value="1"/>
</dbReference>
<dbReference type="Pfam" id="PF06155">
    <property type="entry name" value="GBBH-like_N"/>
    <property type="match status" value="1"/>
</dbReference>
<dbReference type="Pfam" id="PF02668">
    <property type="entry name" value="TauD"/>
    <property type="match status" value="1"/>
</dbReference>
<dbReference type="SUPFAM" id="SSF51197">
    <property type="entry name" value="Clavaminate synthase-like"/>
    <property type="match status" value="1"/>
</dbReference>
<protein>
    <recommendedName>
        <fullName>Trimethyllysine dioxygenase, mitochondrial</fullName>
        <ecNumber evidence="9 10">1.14.11.8</ecNumber>
    </recommendedName>
    <alternativeName>
        <fullName>Epsilon-trimethyllysine 2-oxoglutarate dioxygenase</fullName>
    </alternativeName>
    <alternativeName>
        <fullName>Epsilon-trimethyllysine hydroxylase</fullName>
    </alternativeName>
    <alternativeName>
        <fullName>TML hydroxylase</fullName>
    </alternativeName>
    <alternativeName>
        <fullName>TML-alpha-ketoglutarate dioxygenase</fullName>
        <shortName>TML dioxygenase</shortName>
        <shortName>TMLD</shortName>
    </alternativeName>
</protein>
<reference key="1">
    <citation type="journal article" date="2001" name="J. Biol. Chem.">
        <title>Molecular and biochemical characterization of rat epsilon-N-trimethyllysine hydroxylase, the first enzyme of carnitine biosynthesis.</title>
        <authorList>
            <person name="Vaz F.M."/>
            <person name="Ofman R."/>
            <person name="Westinga K."/>
            <person name="Back J.W."/>
            <person name="Wanders R.J.A."/>
        </authorList>
    </citation>
    <scope>NUCLEOTIDE SEQUENCE [MRNA] (ISOFORM 1)</scope>
    <scope>FUNCTION</scope>
</reference>
<reference key="2">
    <citation type="journal article" date="2004" name="Nat. Genet.">
        <title>Complete sequencing and characterization of 21,243 full-length human cDNAs.</title>
        <authorList>
            <person name="Ota T."/>
            <person name="Suzuki Y."/>
            <person name="Nishikawa T."/>
            <person name="Otsuki T."/>
            <person name="Sugiyama T."/>
            <person name="Irie R."/>
            <person name="Wakamatsu A."/>
            <person name="Hayashi K."/>
            <person name="Sato H."/>
            <person name="Nagai K."/>
            <person name="Kimura K."/>
            <person name="Makita H."/>
            <person name="Sekine M."/>
            <person name="Obayashi M."/>
            <person name="Nishi T."/>
            <person name="Shibahara T."/>
            <person name="Tanaka T."/>
            <person name="Ishii S."/>
            <person name="Yamamoto J."/>
            <person name="Saito K."/>
            <person name="Kawai Y."/>
            <person name="Isono Y."/>
            <person name="Nakamura Y."/>
            <person name="Nagahari K."/>
            <person name="Murakami K."/>
            <person name="Yasuda T."/>
            <person name="Iwayanagi T."/>
            <person name="Wagatsuma M."/>
            <person name="Shiratori A."/>
            <person name="Sudo H."/>
            <person name="Hosoiri T."/>
            <person name="Kaku Y."/>
            <person name="Kodaira H."/>
            <person name="Kondo H."/>
            <person name="Sugawara M."/>
            <person name="Takahashi M."/>
            <person name="Kanda K."/>
            <person name="Yokoi T."/>
            <person name="Furuya T."/>
            <person name="Kikkawa E."/>
            <person name="Omura Y."/>
            <person name="Abe K."/>
            <person name="Kamihara K."/>
            <person name="Katsuta N."/>
            <person name="Sato K."/>
            <person name="Tanikawa M."/>
            <person name="Yamazaki M."/>
            <person name="Ninomiya K."/>
            <person name="Ishibashi T."/>
            <person name="Yamashita H."/>
            <person name="Murakawa K."/>
            <person name="Fujimori K."/>
            <person name="Tanai H."/>
            <person name="Kimata M."/>
            <person name="Watanabe M."/>
            <person name="Hiraoka S."/>
            <person name="Chiba Y."/>
            <person name="Ishida S."/>
            <person name="Ono Y."/>
            <person name="Takiguchi S."/>
            <person name="Watanabe S."/>
            <person name="Yosida M."/>
            <person name="Hotuta T."/>
            <person name="Kusano J."/>
            <person name="Kanehori K."/>
            <person name="Takahashi-Fujii A."/>
            <person name="Hara H."/>
            <person name="Tanase T.-O."/>
            <person name="Nomura Y."/>
            <person name="Togiya S."/>
            <person name="Komai F."/>
            <person name="Hara R."/>
            <person name="Takeuchi K."/>
            <person name="Arita M."/>
            <person name="Imose N."/>
            <person name="Musashino K."/>
            <person name="Yuuki H."/>
            <person name="Oshima A."/>
            <person name="Sasaki N."/>
            <person name="Aotsuka S."/>
            <person name="Yoshikawa Y."/>
            <person name="Matsunawa H."/>
            <person name="Ichihara T."/>
            <person name="Shiohata N."/>
            <person name="Sano S."/>
            <person name="Moriya S."/>
            <person name="Momiyama H."/>
            <person name="Satoh N."/>
            <person name="Takami S."/>
            <person name="Terashima Y."/>
            <person name="Suzuki O."/>
            <person name="Nakagawa S."/>
            <person name="Senoh A."/>
            <person name="Mizoguchi H."/>
            <person name="Goto Y."/>
            <person name="Shimizu F."/>
            <person name="Wakebe H."/>
            <person name="Hishigaki H."/>
            <person name="Watanabe T."/>
            <person name="Sugiyama A."/>
            <person name="Takemoto M."/>
            <person name="Kawakami B."/>
            <person name="Yamazaki M."/>
            <person name="Watanabe K."/>
            <person name="Kumagai A."/>
            <person name="Itakura S."/>
            <person name="Fukuzumi Y."/>
            <person name="Fujimori Y."/>
            <person name="Komiyama M."/>
            <person name="Tashiro H."/>
            <person name="Tanigami A."/>
            <person name="Fujiwara T."/>
            <person name="Ono T."/>
            <person name="Yamada K."/>
            <person name="Fujii Y."/>
            <person name="Ozaki K."/>
            <person name="Hirao M."/>
            <person name="Ohmori Y."/>
            <person name="Kawabata A."/>
            <person name="Hikiji T."/>
            <person name="Kobatake N."/>
            <person name="Inagaki H."/>
            <person name="Ikema Y."/>
            <person name="Okamoto S."/>
            <person name="Okitani R."/>
            <person name="Kawakami T."/>
            <person name="Noguchi S."/>
            <person name="Itoh T."/>
            <person name="Shigeta K."/>
            <person name="Senba T."/>
            <person name="Matsumura K."/>
            <person name="Nakajima Y."/>
            <person name="Mizuno T."/>
            <person name="Morinaga M."/>
            <person name="Sasaki M."/>
            <person name="Togashi T."/>
            <person name="Oyama M."/>
            <person name="Hata H."/>
            <person name="Watanabe M."/>
            <person name="Komatsu T."/>
            <person name="Mizushima-Sugano J."/>
            <person name="Satoh T."/>
            <person name="Shirai Y."/>
            <person name="Takahashi Y."/>
            <person name="Nakagawa K."/>
            <person name="Okumura K."/>
            <person name="Nagase T."/>
            <person name="Nomura N."/>
            <person name="Kikuchi H."/>
            <person name="Masuho Y."/>
            <person name="Yamashita R."/>
            <person name="Nakai K."/>
            <person name="Yada T."/>
            <person name="Nakamura Y."/>
            <person name="Ohara O."/>
            <person name="Isogai T."/>
            <person name="Sugano S."/>
        </authorList>
    </citation>
    <scope>NUCLEOTIDE SEQUENCE [LARGE SCALE MRNA] (ISOFORMS 1 AND 7)</scope>
    <scope>NUCLEOTIDE SEQUENCE [LARGE SCALE MRNA] OF 66-332 (ISOFORM 3)</scope>
    <source>
        <tissue>Placenta</tissue>
        <tissue>Teratocarcinoma</tissue>
        <tissue>Thymus</tissue>
        <tissue>Uterus</tissue>
    </source>
</reference>
<reference key="3">
    <citation type="submission" date="2004-06" db="EMBL/GenBank/DDBJ databases">
        <title>Cloning of human full open reading frames in Gateway(TM) system entry vector (pDONR201).</title>
        <authorList>
            <person name="Ebert L."/>
            <person name="Schick M."/>
            <person name="Neubert P."/>
            <person name="Schatten R."/>
            <person name="Henze S."/>
            <person name="Korn B."/>
        </authorList>
    </citation>
    <scope>NUCLEOTIDE SEQUENCE [LARGE SCALE MRNA] (ISOFORM 1)</scope>
</reference>
<reference key="4">
    <citation type="submission" date="2006-07" db="EMBL/GenBank/DDBJ databases">
        <authorList>
            <person name="Bechtel S."/>
            <person name="Schupp I."/>
            <person name="Duda A."/>
            <person name="Wellenreuther R."/>
            <person name="Mehrle A."/>
            <person name="Ruschke V."/>
            <person name="Poustka A."/>
            <person name="Wiemann S."/>
        </authorList>
    </citation>
    <scope>NUCLEOTIDE SEQUENCE [LARGE SCALE MRNA] (ISOFORM 4)</scope>
</reference>
<reference key="5">
    <citation type="journal article" date="2005" name="Nature">
        <title>The DNA sequence of the human X chromosome.</title>
        <authorList>
            <person name="Ross M.T."/>
            <person name="Grafham D.V."/>
            <person name="Coffey A.J."/>
            <person name="Scherer S."/>
            <person name="McLay K."/>
            <person name="Muzny D."/>
            <person name="Platzer M."/>
            <person name="Howell G.R."/>
            <person name="Burrows C."/>
            <person name="Bird C.P."/>
            <person name="Frankish A."/>
            <person name="Lovell F.L."/>
            <person name="Howe K.L."/>
            <person name="Ashurst J.L."/>
            <person name="Fulton R.S."/>
            <person name="Sudbrak R."/>
            <person name="Wen G."/>
            <person name="Jones M.C."/>
            <person name="Hurles M.E."/>
            <person name="Andrews T.D."/>
            <person name="Scott C.E."/>
            <person name="Searle S."/>
            <person name="Ramser J."/>
            <person name="Whittaker A."/>
            <person name="Deadman R."/>
            <person name="Carter N.P."/>
            <person name="Hunt S.E."/>
            <person name="Chen R."/>
            <person name="Cree A."/>
            <person name="Gunaratne P."/>
            <person name="Havlak P."/>
            <person name="Hodgson A."/>
            <person name="Metzker M.L."/>
            <person name="Richards S."/>
            <person name="Scott G."/>
            <person name="Steffen D."/>
            <person name="Sodergren E."/>
            <person name="Wheeler D.A."/>
            <person name="Worley K.C."/>
            <person name="Ainscough R."/>
            <person name="Ambrose K.D."/>
            <person name="Ansari-Lari M.A."/>
            <person name="Aradhya S."/>
            <person name="Ashwell R.I."/>
            <person name="Babbage A.K."/>
            <person name="Bagguley C.L."/>
            <person name="Ballabio A."/>
            <person name="Banerjee R."/>
            <person name="Barker G.E."/>
            <person name="Barlow K.F."/>
            <person name="Barrett I.P."/>
            <person name="Bates K.N."/>
            <person name="Beare D.M."/>
            <person name="Beasley H."/>
            <person name="Beasley O."/>
            <person name="Beck A."/>
            <person name="Bethel G."/>
            <person name="Blechschmidt K."/>
            <person name="Brady N."/>
            <person name="Bray-Allen S."/>
            <person name="Bridgeman A.M."/>
            <person name="Brown A.J."/>
            <person name="Brown M.J."/>
            <person name="Bonnin D."/>
            <person name="Bruford E.A."/>
            <person name="Buhay C."/>
            <person name="Burch P."/>
            <person name="Burford D."/>
            <person name="Burgess J."/>
            <person name="Burrill W."/>
            <person name="Burton J."/>
            <person name="Bye J.M."/>
            <person name="Carder C."/>
            <person name="Carrel L."/>
            <person name="Chako J."/>
            <person name="Chapman J.C."/>
            <person name="Chavez D."/>
            <person name="Chen E."/>
            <person name="Chen G."/>
            <person name="Chen Y."/>
            <person name="Chen Z."/>
            <person name="Chinault C."/>
            <person name="Ciccodicola A."/>
            <person name="Clark S.Y."/>
            <person name="Clarke G."/>
            <person name="Clee C.M."/>
            <person name="Clegg S."/>
            <person name="Clerc-Blankenburg K."/>
            <person name="Clifford K."/>
            <person name="Cobley V."/>
            <person name="Cole C.G."/>
            <person name="Conquer J.S."/>
            <person name="Corby N."/>
            <person name="Connor R.E."/>
            <person name="David R."/>
            <person name="Davies J."/>
            <person name="Davis C."/>
            <person name="Davis J."/>
            <person name="Delgado O."/>
            <person name="Deshazo D."/>
            <person name="Dhami P."/>
            <person name="Ding Y."/>
            <person name="Dinh H."/>
            <person name="Dodsworth S."/>
            <person name="Draper H."/>
            <person name="Dugan-Rocha S."/>
            <person name="Dunham A."/>
            <person name="Dunn M."/>
            <person name="Durbin K.J."/>
            <person name="Dutta I."/>
            <person name="Eades T."/>
            <person name="Ellwood M."/>
            <person name="Emery-Cohen A."/>
            <person name="Errington H."/>
            <person name="Evans K.L."/>
            <person name="Faulkner L."/>
            <person name="Francis F."/>
            <person name="Frankland J."/>
            <person name="Fraser A.E."/>
            <person name="Galgoczy P."/>
            <person name="Gilbert J."/>
            <person name="Gill R."/>
            <person name="Gloeckner G."/>
            <person name="Gregory S.G."/>
            <person name="Gribble S."/>
            <person name="Griffiths C."/>
            <person name="Grocock R."/>
            <person name="Gu Y."/>
            <person name="Gwilliam R."/>
            <person name="Hamilton C."/>
            <person name="Hart E.A."/>
            <person name="Hawes A."/>
            <person name="Heath P.D."/>
            <person name="Heitmann K."/>
            <person name="Hennig S."/>
            <person name="Hernandez J."/>
            <person name="Hinzmann B."/>
            <person name="Ho S."/>
            <person name="Hoffs M."/>
            <person name="Howden P.J."/>
            <person name="Huckle E.J."/>
            <person name="Hume J."/>
            <person name="Hunt P.J."/>
            <person name="Hunt A.R."/>
            <person name="Isherwood J."/>
            <person name="Jacob L."/>
            <person name="Johnson D."/>
            <person name="Jones S."/>
            <person name="de Jong P.J."/>
            <person name="Joseph S.S."/>
            <person name="Keenan S."/>
            <person name="Kelly S."/>
            <person name="Kershaw J.K."/>
            <person name="Khan Z."/>
            <person name="Kioschis P."/>
            <person name="Klages S."/>
            <person name="Knights A.J."/>
            <person name="Kosiura A."/>
            <person name="Kovar-Smith C."/>
            <person name="Laird G.K."/>
            <person name="Langford C."/>
            <person name="Lawlor S."/>
            <person name="Leversha M."/>
            <person name="Lewis L."/>
            <person name="Liu W."/>
            <person name="Lloyd C."/>
            <person name="Lloyd D.M."/>
            <person name="Loulseged H."/>
            <person name="Loveland J.E."/>
            <person name="Lovell J.D."/>
            <person name="Lozado R."/>
            <person name="Lu J."/>
            <person name="Lyne R."/>
            <person name="Ma J."/>
            <person name="Maheshwari M."/>
            <person name="Matthews L.H."/>
            <person name="McDowall J."/>
            <person name="McLaren S."/>
            <person name="McMurray A."/>
            <person name="Meidl P."/>
            <person name="Meitinger T."/>
            <person name="Milne S."/>
            <person name="Miner G."/>
            <person name="Mistry S.L."/>
            <person name="Morgan M."/>
            <person name="Morris S."/>
            <person name="Mueller I."/>
            <person name="Mullikin J.C."/>
            <person name="Nguyen N."/>
            <person name="Nordsiek G."/>
            <person name="Nyakatura G."/>
            <person name="O'dell C.N."/>
            <person name="Okwuonu G."/>
            <person name="Palmer S."/>
            <person name="Pandian R."/>
            <person name="Parker D."/>
            <person name="Parrish J."/>
            <person name="Pasternak S."/>
            <person name="Patel D."/>
            <person name="Pearce A.V."/>
            <person name="Pearson D.M."/>
            <person name="Pelan S.E."/>
            <person name="Perez L."/>
            <person name="Porter K.M."/>
            <person name="Ramsey Y."/>
            <person name="Reichwald K."/>
            <person name="Rhodes S."/>
            <person name="Ridler K.A."/>
            <person name="Schlessinger D."/>
            <person name="Schueler M.G."/>
            <person name="Sehra H.K."/>
            <person name="Shaw-Smith C."/>
            <person name="Shen H."/>
            <person name="Sheridan E.M."/>
            <person name="Shownkeen R."/>
            <person name="Skuce C.D."/>
            <person name="Smith M.L."/>
            <person name="Sotheran E.C."/>
            <person name="Steingruber H.E."/>
            <person name="Steward C.A."/>
            <person name="Storey R."/>
            <person name="Swann R.M."/>
            <person name="Swarbreck D."/>
            <person name="Tabor P.E."/>
            <person name="Taudien S."/>
            <person name="Taylor T."/>
            <person name="Teague B."/>
            <person name="Thomas K."/>
            <person name="Thorpe A."/>
            <person name="Timms K."/>
            <person name="Tracey A."/>
            <person name="Trevanion S."/>
            <person name="Tromans A.C."/>
            <person name="d'Urso M."/>
            <person name="Verduzco D."/>
            <person name="Villasana D."/>
            <person name="Waldron L."/>
            <person name="Wall M."/>
            <person name="Wang Q."/>
            <person name="Warren J."/>
            <person name="Warry G.L."/>
            <person name="Wei X."/>
            <person name="West A."/>
            <person name="Whitehead S.L."/>
            <person name="Whiteley M.N."/>
            <person name="Wilkinson J.E."/>
            <person name="Willey D.L."/>
            <person name="Williams G."/>
            <person name="Williams L."/>
            <person name="Williamson A."/>
            <person name="Williamson H."/>
            <person name="Wilming L."/>
            <person name="Woodmansey R.L."/>
            <person name="Wray P.W."/>
            <person name="Yen J."/>
            <person name="Zhang J."/>
            <person name="Zhou J."/>
            <person name="Zoghbi H."/>
            <person name="Zorilla S."/>
            <person name="Buck D."/>
            <person name="Reinhardt R."/>
            <person name="Poustka A."/>
            <person name="Rosenthal A."/>
            <person name="Lehrach H."/>
            <person name="Meindl A."/>
            <person name="Minx P.J."/>
            <person name="Hillier L.W."/>
            <person name="Willard H.F."/>
            <person name="Wilson R.K."/>
            <person name="Waterston R.H."/>
            <person name="Rice C.M."/>
            <person name="Vaudin M."/>
            <person name="Coulson A."/>
            <person name="Nelson D.L."/>
            <person name="Weinstock G."/>
            <person name="Sulston J.E."/>
            <person name="Durbin R.M."/>
            <person name="Hubbard T."/>
            <person name="Gibbs R.A."/>
            <person name="Beck S."/>
            <person name="Rogers J."/>
            <person name="Bentley D.R."/>
        </authorList>
    </citation>
    <scope>NUCLEOTIDE SEQUENCE [LARGE SCALE GENOMIC DNA]</scope>
</reference>
<reference key="6">
    <citation type="journal article" date="2004" name="Genome Res.">
        <title>The status, quality, and expansion of the NIH full-length cDNA project: the Mammalian Gene Collection (MGC).</title>
        <authorList>
            <consortium name="The MGC Project Team"/>
        </authorList>
    </citation>
    <scope>NUCLEOTIDE SEQUENCE [LARGE SCALE MRNA] (ISOFORM 4)</scope>
    <source>
        <tissue>Pancreas</tissue>
    </source>
</reference>
<reference key="7">
    <citation type="journal article" date="2005" name="J. Cell. Physiol.">
        <title>Functional analysis of TMLH variants and definition of domains required for catalytic activity and mitochondrial targeting.</title>
        <authorList>
            <person name="Monfregola J."/>
            <person name="Cevenini A."/>
            <person name="Terracciano A."/>
            <person name="van Vlies N."/>
            <person name="Arbucci S."/>
            <person name="Wanders R.J."/>
            <person name="D'Urso M."/>
            <person name="Vaz F.M."/>
            <person name="Ursini M.V."/>
        </authorList>
    </citation>
    <scope>TISSUE SPECIFICITY</scope>
    <scope>SUBCELLULAR LOCATION</scope>
    <scope>TRANSIT PEPTIDE CLEAVAGE SITE</scope>
    <scope>MUTAGENESIS OF HIS-389</scope>
    <scope>ALTERNATIVE SPLICING (ISOFORMS 1 AND 2)</scope>
</reference>
<reference key="8">
    <citation type="journal article" date="2007" name="Gene">
        <title>Functional characterization of the TMLH gene: promoter analysis, in situ hybridization, identification and mapping of alternative splicing variants.</title>
        <authorList>
            <person name="Monfregola J."/>
            <person name="Napolitano G."/>
            <person name="Conte I."/>
            <person name="Cevenini A."/>
            <person name="Migliaccio C."/>
            <person name="D'Urso M."/>
            <person name="Ursini M.V."/>
        </authorList>
    </citation>
    <scope>ALTERNATIVE SPLICING</scope>
    <scope>TISSUE SPECIFICITY</scope>
</reference>
<reference key="9">
    <citation type="journal article" date="2009" name="Science">
        <title>Lysine acetylation targets protein complexes and co-regulates major cellular functions.</title>
        <authorList>
            <person name="Choudhary C."/>
            <person name="Kumar C."/>
            <person name="Gnad F."/>
            <person name="Nielsen M.L."/>
            <person name="Rehman M."/>
            <person name="Walther T.C."/>
            <person name="Olsen J.V."/>
            <person name="Mann M."/>
        </authorList>
    </citation>
    <scope>ACETYLATION [LARGE SCALE ANALYSIS] AT LYS-236</scope>
    <scope>IDENTIFICATION BY MASS SPECTROMETRY [LARGE SCALE ANALYSIS]</scope>
</reference>
<reference key="10">
    <citation type="journal article" date="2011" name="Hum. Mol. Genet.">
        <title>Use of array CGH to detect exonic copy number variants throughout the genome in autism families detects a novel deletion in TMLHE.</title>
        <authorList>
            <person name="Celestino-Soper P.B."/>
            <person name="Shaw C.A."/>
            <person name="Sanders S.J."/>
            <person name="Li J."/>
            <person name="Murtha M.T."/>
            <person name="Ercan-Sencicek A.G."/>
            <person name="Davis L."/>
            <person name="Thomson S."/>
            <person name="Gambin T."/>
            <person name="Chinault A.C."/>
            <person name="Ou Z."/>
            <person name="German J.R."/>
            <person name="Milosavljevic A."/>
            <person name="Sutcliffe J.S."/>
            <person name="Cook E.H. Jr."/>
            <person name="Stankiewicz P."/>
            <person name="State M.W."/>
            <person name="Beaudet A.L."/>
        </authorList>
    </citation>
    <scope>INVOLVEMENT IN AUTSX6</scope>
</reference>
<reference key="11">
    <citation type="journal article" date="2016" name="Chem. Commun. (Camb.)">
        <title>Human carnitine biosynthesis proceeds via (2S,3S)-3-hydroxy-Nepsilon-trimethyllysine.</title>
        <authorList>
            <person name="Lesniak R.K."/>
            <person name="Markolovic S."/>
            <person name="Tars K."/>
            <person name="Schofield C.J."/>
        </authorList>
    </citation>
    <scope>CATALYTIC ACTIVITY</scope>
</reference>
<reference key="12">
    <citation type="journal article" date="2017" name="Org. Lett.">
        <title>Evidence that trimethyllysine hydroxylase catalyzes the formation of (2S,3S)-3-hydroxy-Nepsilon-trimethyllysine.</title>
        <authorList>
            <person name="Reddy Y.V."/>
            <person name="Al Temimi A.H."/>
            <person name="White P.B."/>
            <person name="Mecinovic J."/>
        </authorList>
    </citation>
    <scope>CATALYTIC ACTIVITY</scope>
</reference>
<reference key="13">
    <citation type="journal article" date="2012" name="Transl. Psychiatry">
        <title>Analysis of the chromosome X exome in patients with autism spectrum disorders identified novel candidate genes, including TMLHE.</title>
        <authorList>
            <person name="Nava C."/>
            <person name="Lamari F."/>
            <person name="Heron D."/>
            <person name="Mignot C."/>
            <person name="Rastetter A."/>
            <person name="Keren B."/>
            <person name="Cohen D."/>
            <person name="Faudet A."/>
            <person name="Bouteiller D."/>
            <person name="Gilleron M."/>
            <person name="Jacquette A."/>
            <person name="Whalen S."/>
            <person name="Afenjar A."/>
            <person name="Perisse D."/>
            <person name="Laurent C."/>
            <person name="Dupuits C."/>
            <person name="Gautier C."/>
            <person name="Gerard M."/>
            <person name="Huguet G."/>
            <person name="Caillet S."/>
            <person name="Leheup B."/>
            <person name="Leboyer M."/>
            <person name="Gillberg C."/>
            <person name="Delorme R."/>
            <person name="Bourgeron T."/>
            <person name="Brice A."/>
            <person name="Depienne C."/>
        </authorList>
    </citation>
    <scope>VARIANTS AUTSX6 HIS-244 AND ASP-369</scope>
    <scope>CHARACTERIZATION OF VARIANTS AUTSX6 HIS-244 AND ASP-369</scope>
    <scope>FUNCTION</scope>
</reference>
<gene>
    <name type="primary">TMLHE</name>
    <name type="synonym">TMLH</name>
</gene>
<name>TMLH_HUMAN</name>
<sequence length="421" mass="49518">MWYHRLSHLHSRLQDLLKGGVIYPALPQPNFKSLLPLAVHWHHTASKSLTCAWQQHEDHFELKYANTVMRFDYVWLRDHCRSASCYNSKTHQRSLDTASVDLCIKPKTIRLDETTLFFTWPDGHVTKYDLNWLVKNSYEGQKQKVIQPRILWNAEIYQQAQVPSVDCQSFLETNEGLKKFLQNFLLYGIAFVENVPPTQEHTEKLAERISLIRETIYGRMWYFTSDFSRGDTAYTKLALDRHTDTTYFQEPCGIQVFHCLKHEGTGGRTLLVDGFYAAEQVLQKAPEEFELLSKVPLKHEYIEDVGECHNHMIGIGPVLNIYPWNKELYLIRYNNYDRAVINTVPYDVVHRWYTAHRTLTIELRRPENEFWVKLKPGRVLFIDNWRVLHGRECFTGYRQLCGCYLTRDDVLNTARLLGLQA</sequence>
<organism>
    <name type="scientific">Homo sapiens</name>
    <name type="common">Human</name>
    <dbReference type="NCBI Taxonomy" id="9606"/>
    <lineage>
        <taxon>Eukaryota</taxon>
        <taxon>Metazoa</taxon>
        <taxon>Chordata</taxon>
        <taxon>Craniata</taxon>
        <taxon>Vertebrata</taxon>
        <taxon>Euteleostomi</taxon>
        <taxon>Mammalia</taxon>
        <taxon>Eutheria</taxon>
        <taxon>Euarchontoglires</taxon>
        <taxon>Primates</taxon>
        <taxon>Haplorrhini</taxon>
        <taxon>Catarrhini</taxon>
        <taxon>Hominidae</taxon>
        <taxon>Homo</taxon>
    </lineage>
</organism>